<protein>
    <recommendedName>
        <fullName evidence="1">Lactate utilization protein A</fullName>
    </recommendedName>
</protein>
<sequence length="238" mass="26521">MKVSLFITCLVDMFQSNVGKATVELLERLGCEVDFPEGQICCGQPAYNSGYVKDSKKAMRRMIETFESAEYVVSPSGSCAFMFKEYPHLFRDEPAWAEKAQRLADKTYELTDFIVNVLKIEDVGATLEKKATYHTSCHMTRLLGVTDAPMKLLRHVKGLEFTPLPRKHDCCGFGGTFSVKMSQISEQMVDEKVACVEETAADVLIGADCGCLMNIGGRIGRKNKPIEVMHIAEVLNSR</sequence>
<keyword id="KW-1185">Reference proteome</keyword>
<feature type="chain" id="PRO_0000384041" description="Lactate utilization protein A">
    <location>
        <begin position="1"/>
        <end position="238"/>
    </location>
</feature>
<name>LUTA_BACLD</name>
<organism>
    <name type="scientific">Bacillus licheniformis (strain ATCC 14580 / DSM 13 / JCM 2505 / CCUG 7422 / NBRC 12200 / NCIMB 9375 / NCTC 10341 / NRRL NRS-1264 / Gibson 46)</name>
    <dbReference type="NCBI Taxonomy" id="279010"/>
    <lineage>
        <taxon>Bacteria</taxon>
        <taxon>Bacillati</taxon>
        <taxon>Bacillota</taxon>
        <taxon>Bacilli</taxon>
        <taxon>Bacillales</taxon>
        <taxon>Bacillaceae</taxon>
        <taxon>Bacillus</taxon>
    </lineage>
</organism>
<evidence type="ECO:0000255" key="1">
    <source>
        <dbReference type="HAMAP-Rule" id="MF_02105"/>
    </source>
</evidence>
<dbReference type="EMBL" id="AE017333">
    <property type="protein sequence ID" value="AAU42495.2"/>
    <property type="molecule type" value="Genomic_DNA"/>
</dbReference>
<dbReference type="EMBL" id="CP000002">
    <property type="protein sequence ID" value="AAU25124.1"/>
    <property type="molecule type" value="Genomic_DNA"/>
</dbReference>
<dbReference type="RefSeq" id="WP_011198333.1">
    <property type="nucleotide sequence ID" value="NC_006322.1"/>
</dbReference>
<dbReference type="SMR" id="Q62Q36"/>
<dbReference type="STRING" id="279010.BL03456"/>
<dbReference type="KEGG" id="bld:BLi03675"/>
<dbReference type="KEGG" id="bli:BL03456"/>
<dbReference type="PATRIC" id="fig|279010.13.peg.3741"/>
<dbReference type="eggNOG" id="COG0247">
    <property type="taxonomic scope" value="Bacteria"/>
</dbReference>
<dbReference type="HOGENOM" id="CLU_023081_1_0_9"/>
<dbReference type="Proteomes" id="UP000000606">
    <property type="component" value="Chromosome"/>
</dbReference>
<dbReference type="GO" id="GO:0005829">
    <property type="term" value="C:cytosol"/>
    <property type="evidence" value="ECO:0007669"/>
    <property type="project" value="TreeGrafter"/>
</dbReference>
<dbReference type="GO" id="GO:0016491">
    <property type="term" value="F:oxidoreductase activity"/>
    <property type="evidence" value="ECO:0007669"/>
    <property type="project" value="UniProtKB-ARBA"/>
</dbReference>
<dbReference type="GO" id="GO:0006089">
    <property type="term" value="P:lactate metabolic process"/>
    <property type="evidence" value="ECO:0007669"/>
    <property type="project" value="UniProtKB-UniRule"/>
</dbReference>
<dbReference type="HAMAP" id="MF_02105">
    <property type="entry name" value="LutA"/>
    <property type="match status" value="1"/>
</dbReference>
<dbReference type="InterPro" id="IPR004017">
    <property type="entry name" value="Cys_rich_dom"/>
</dbReference>
<dbReference type="InterPro" id="IPR022822">
    <property type="entry name" value="LutA"/>
</dbReference>
<dbReference type="PANTHER" id="PTHR30296:SF0">
    <property type="entry name" value="LACTATE UTILIZATION PROTEIN A"/>
    <property type="match status" value="1"/>
</dbReference>
<dbReference type="PANTHER" id="PTHR30296">
    <property type="entry name" value="UNCHARACTERIZED PROTEIN YKGE"/>
    <property type="match status" value="1"/>
</dbReference>
<dbReference type="Pfam" id="PF02754">
    <property type="entry name" value="CCG"/>
    <property type="match status" value="2"/>
</dbReference>
<gene>
    <name evidence="1" type="primary">lutA</name>
    <name type="synonym">yvfV</name>
    <name type="ordered locus">BLi03675</name>
    <name type="ordered locus">BL03456</name>
</gene>
<proteinExistence type="inferred from homology"/>
<accession>Q62Q36</accession>
<accession>Q65EL9</accession>
<comment type="function">
    <text evidence="1">Is involved in L-lactate degradation and allows cells to grow with lactate as the sole carbon source.</text>
</comment>
<comment type="similarity">
    <text evidence="1">Belongs to the LutA/YkgE family.</text>
</comment>
<reference key="1">
    <citation type="journal article" date="2004" name="J. Mol. Microbiol. Biotechnol.">
        <title>The complete genome sequence of Bacillus licheniformis DSM13, an organism with great industrial potential.</title>
        <authorList>
            <person name="Veith B."/>
            <person name="Herzberg C."/>
            <person name="Steckel S."/>
            <person name="Feesche J."/>
            <person name="Maurer K.H."/>
            <person name="Ehrenreich P."/>
            <person name="Baeumer S."/>
            <person name="Henne A."/>
            <person name="Liesegang H."/>
            <person name="Merkl R."/>
            <person name="Ehrenreich A."/>
            <person name="Gottschalk G."/>
        </authorList>
    </citation>
    <scope>NUCLEOTIDE SEQUENCE [LARGE SCALE GENOMIC DNA]</scope>
    <source>
        <strain>ATCC 14580 / DSM 13 / JCM 2505 / CCUG 7422 / NBRC 12200 / NCIMB 9375 / NCTC 10341 / NRRL NRS-1264 / Gibson 46</strain>
    </source>
</reference>
<reference key="2">
    <citation type="journal article" date="2004" name="Genome Biol.">
        <title>Complete genome sequence of the industrial bacterium Bacillus licheniformis and comparisons with closely related Bacillus species.</title>
        <authorList>
            <person name="Rey M.W."/>
            <person name="Ramaiya P."/>
            <person name="Nelson B.A."/>
            <person name="Brody-Karpin S.D."/>
            <person name="Zaretsky E.J."/>
            <person name="Tang M."/>
            <person name="Lopez de Leon A."/>
            <person name="Xiang H."/>
            <person name="Gusti V."/>
            <person name="Clausen I.G."/>
            <person name="Olsen P.B."/>
            <person name="Rasmussen M.D."/>
            <person name="Andersen J.T."/>
            <person name="Joergensen P.L."/>
            <person name="Larsen T.S."/>
            <person name="Sorokin A."/>
            <person name="Bolotin A."/>
            <person name="Lapidus A."/>
            <person name="Galleron N."/>
            <person name="Ehrlich S.D."/>
            <person name="Berka R.M."/>
        </authorList>
    </citation>
    <scope>NUCLEOTIDE SEQUENCE [LARGE SCALE GENOMIC DNA]</scope>
    <source>
        <strain>ATCC 14580 / DSM 13 / JCM 2505 / CCUG 7422 / NBRC 12200 / NCIMB 9375 / NCTC 10341 / NRRL NRS-1264 / Gibson 46</strain>
    </source>
</reference>